<protein>
    <recommendedName>
        <fullName evidence="1">Phosphoheptose isomerase</fullName>
        <ecNumber evidence="1">5.3.1.28</ecNumber>
    </recommendedName>
    <alternativeName>
        <fullName evidence="1">Sedoheptulose 7-phosphate isomerase</fullName>
    </alternativeName>
</protein>
<organism>
    <name type="scientific">Pseudomonas syringae pv. syringae (strain B728a)</name>
    <dbReference type="NCBI Taxonomy" id="205918"/>
    <lineage>
        <taxon>Bacteria</taxon>
        <taxon>Pseudomonadati</taxon>
        <taxon>Pseudomonadota</taxon>
        <taxon>Gammaproteobacteria</taxon>
        <taxon>Pseudomonadales</taxon>
        <taxon>Pseudomonadaceae</taxon>
        <taxon>Pseudomonas</taxon>
        <taxon>Pseudomonas syringae</taxon>
    </lineage>
</organism>
<evidence type="ECO:0000255" key="1">
    <source>
        <dbReference type="HAMAP-Rule" id="MF_00067"/>
    </source>
</evidence>
<reference key="1">
    <citation type="journal article" date="2005" name="Proc. Natl. Acad. Sci. U.S.A.">
        <title>Comparison of the complete genome sequences of Pseudomonas syringae pv. syringae B728a and pv. tomato DC3000.</title>
        <authorList>
            <person name="Feil H."/>
            <person name="Feil W.S."/>
            <person name="Chain P."/>
            <person name="Larimer F."/>
            <person name="Dibartolo G."/>
            <person name="Copeland A."/>
            <person name="Lykidis A."/>
            <person name="Trong S."/>
            <person name="Nolan M."/>
            <person name="Goltsman E."/>
            <person name="Thiel J."/>
            <person name="Malfatti S."/>
            <person name="Loper J.E."/>
            <person name="Lapidus A."/>
            <person name="Detter J.C."/>
            <person name="Land M."/>
            <person name="Richardson P.M."/>
            <person name="Kyrpides N.C."/>
            <person name="Ivanova N."/>
            <person name="Lindow S.E."/>
        </authorList>
    </citation>
    <scope>NUCLEOTIDE SEQUENCE [LARGE SCALE GENOMIC DNA]</scope>
    <source>
        <strain>B728a</strain>
    </source>
</reference>
<keyword id="KW-0119">Carbohydrate metabolism</keyword>
<keyword id="KW-0963">Cytoplasm</keyword>
<keyword id="KW-0413">Isomerase</keyword>
<keyword id="KW-0479">Metal-binding</keyword>
<keyword id="KW-0862">Zinc</keyword>
<feature type="chain" id="PRO_1000009091" description="Phosphoheptose isomerase">
    <location>
        <begin position="1"/>
        <end position="197"/>
    </location>
</feature>
<feature type="domain" description="SIS" evidence="1">
    <location>
        <begin position="36"/>
        <end position="197"/>
    </location>
</feature>
<feature type="binding site" evidence="1">
    <location>
        <begin position="51"/>
        <end position="53"/>
    </location>
    <ligand>
        <name>substrate</name>
    </ligand>
</feature>
<feature type="binding site" evidence="1">
    <location>
        <position position="60"/>
    </location>
    <ligand>
        <name>Zn(2+)</name>
        <dbReference type="ChEBI" id="CHEBI:29105"/>
    </ligand>
</feature>
<feature type="binding site" evidence="1">
    <location>
        <position position="64"/>
    </location>
    <ligand>
        <name>substrate</name>
    </ligand>
</feature>
<feature type="binding site" evidence="1">
    <location>
        <position position="64"/>
    </location>
    <ligand>
        <name>Zn(2+)</name>
        <dbReference type="ChEBI" id="CHEBI:29105"/>
    </ligand>
</feature>
<feature type="binding site" evidence="1">
    <location>
        <begin position="93"/>
        <end position="94"/>
    </location>
    <ligand>
        <name>substrate</name>
    </ligand>
</feature>
<feature type="binding site" evidence="1">
    <location>
        <begin position="119"/>
        <end position="121"/>
    </location>
    <ligand>
        <name>substrate</name>
    </ligand>
</feature>
<feature type="binding site" evidence="1">
    <location>
        <position position="124"/>
    </location>
    <ligand>
        <name>substrate</name>
    </ligand>
</feature>
<feature type="binding site" evidence="1">
    <location>
        <position position="174"/>
    </location>
    <ligand>
        <name>substrate</name>
    </ligand>
</feature>
<feature type="binding site" evidence="1">
    <location>
        <position position="174"/>
    </location>
    <ligand>
        <name>Zn(2+)</name>
        <dbReference type="ChEBI" id="CHEBI:29105"/>
    </ligand>
</feature>
<feature type="binding site" evidence="1">
    <location>
        <position position="182"/>
    </location>
    <ligand>
        <name>Zn(2+)</name>
        <dbReference type="ChEBI" id="CHEBI:29105"/>
    </ligand>
</feature>
<dbReference type="EC" id="5.3.1.28" evidence="1"/>
<dbReference type="EMBL" id="CP000075">
    <property type="protein sequence ID" value="AAY39145.1"/>
    <property type="molecule type" value="Genomic_DNA"/>
</dbReference>
<dbReference type="RefSeq" id="WP_003418801.1">
    <property type="nucleotide sequence ID" value="NC_007005.1"/>
</dbReference>
<dbReference type="RefSeq" id="YP_237183.1">
    <property type="nucleotide sequence ID" value="NC_007005.1"/>
</dbReference>
<dbReference type="SMR" id="Q4ZNX7"/>
<dbReference type="STRING" id="205918.Psyr_4115"/>
<dbReference type="KEGG" id="psb:Psyr_4115"/>
<dbReference type="PATRIC" id="fig|205918.7.peg.4233"/>
<dbReference type="eggNOG" id="COG0279">
    <property type="taxonomic scope" value="Bacteria"/>
</dbReference>
<dbReference type="HOGENOM" id="CLU_080999_3_1_6"/>
<dbReference type="OrthoDB" id="9810929at2"/>
<dbReference type="UniPathway" id="UPA00041">
    <property type="reaction ID" value="UER00436"/>
</dbReference>
<dbReference type="Proteomes" id="UP000000426">
    <property type="component" value="Chromosome"/>
</dbReference>
<dbReference type="GO" id="GO:0005737">
    <property type="term" value="C:cytoplasm"/>
    <property type="evidence" value="ECO:0007669"/>
    <property type="project" value="UniProtKB-SubCell"/>
</dbReference>
<dbReference type="GO" id="GO:0097367">
    <property type="term" value="F:carbohydrate derivative binding"/>
    <property type="evidence" value="ECO:0007669"/>
    <property type="project" value="InterPro"/>
</dbReference>
<dbReference type="GO" id="GO:0008968">
    <property type="term" value="F:D-sedoheptulose 7-phosphate isomerase activity"/>
    <property type="evidence" value="ECO:0007669"/>
    <property type="project" value="UniProtKB-UniRule"/>
</dbReference>
<dbReference type="GO" id="GO:0008270">
    <property type="term" value="F:zinc ion binding"/>
    <property type="evidence" value="ECO:0007669"/>
    <property type="project" value="UniProtKB-UniRule"/>
</dbReference>
<dbReference type="GO" id="GO:0005975">
    <property type="term" value="P:carbohydrate metabolic process"/>
    <property type="evidence" value="ECO:0007669"/>
    <property type="project" value="UniProtKB-UniRule"/>
</dbReference>
<dbReference type="GO" id="GO:2001061">
    <property type="term" value="P:D-glycero-D-manno-heptose 7-phosphate biosynthetic process"/>
    <property type="evidence" value="ECO:0007669"/>
    <property type="project" value="UniProtKB-UniPathway"/>
</dbReference>
<dbReference type="CDD" id="cd05006">
    <property type="entry name" value="SIS_GmhA"/>
    <property type="match status" value="1"/>
</dbReference>
<dbReference type="Gene3D" id="3.40.50.10490">
    <property type="entry name" value="Glucose-6-phosphate isomerase like protein, domain 1"/>
    <property type="match status" value="1"/>
</dbReference>
<dbReference type="HAMAP" id="MF_00067">
    <property type="entry name" value="GmhA"/>
    <property type="match status" value="1"/>
</dbReference>
<dbReference type="InterPro" id="IPR035461">
    <property type="entry name" value="GmhA/DiaA"/>
</dbReference>
<dbReference type="InterPro" id="IPR004515">
    <property type="entry name" value="Phosphoheptose_Isoase"/>
</dbReference>
<dbReference type="InterPro" id="IPR001347">
    <property type="entry name" value="SIS_dom"/>
</dbReference>
<dbReference type="InterPro" id="IPR046348">
    <property type="entry name" value="SIS_dom_sf"/>
</dbReference>
<dbReference type="InterPro" id="IPR050099">
    <property type="entry name" value="SIS_GmhA/DiaA_subfam"/>
</dbReference>
<dbReference type="NCBIfam" id="NF010546">
    <property type="entry name" value="PRK13936.1"/>
    <property type="match status" value="1"/>
</dbReference>
<dbReference type="PANTHER" id="PTHR30390:SF6">
    <property type="entry name" value="DNAA INITIATOR-ASSOCIATING PROTEIN DIAA"/>
    <property type="match status" value="1"/>
</dbReference>
<dbReference type="PANTHER" id="PTHR30390">
    <property type="entry name" value="SEDOHEPTULOSE 7-PHOSPHATE ISOMERASE / DNAA INITIATOR-ASSOCIATING FACTOR FOR REPLICATION INITIATION"/>
    <property type="match status" value="1"/>
</dbReference>
<dbReference type="Pfam" id="PF13580">
    <property type="entry name" value="SIS_2"/>
    <property type="match status" value="1"/>
</dbReference>
<dbReference type="SUPFAM" id="SSF53697">
    <property type="entry name" value="SIS domain"/>
    <property type="match status" value="1"/>
</dbReference>
<dbReference type="PROSITE" id="PS51464">
    <property type="entry name" value="SIS"/>
    <property type="match status" value="1"/>
</dbReference>
<sequence>MDMQSRIRRLFQASIETKQQAMEVLAPFIEQASQVMVNALLNEGKMLACGNGGSAGDAQHFSSELLNRFERERPSLPAIALTTDSSTITSIANDYSYNEIFSKQIRALGQPGDVLLAISTSGNSANIIQAIQAAHDREMIVVALTGRDGGGMASLLLPEDVEIRVPANVTARIQEVHLLAIHCLCDLIDSQLFGSEE</sequence>
<name>GMHA_PSEU2</name>
<proteinExistence type="inferred from homology"/>
<accession>Q4ZNX7</accession>
<comment type="function">
    <text evidence="1">Catalyzes the isomerization of sedoheptulose 7-phosphate in D-glycero-D-manno-heptose 7-phosphate.</text>
</comment>
<comment type="catalytic activity">
    <reaction evidence="1">
        <text>2 D-sedoheptulose 7-phosphate = D-glycero-alpha-D-manno-heptose 7-phosphate + D-glycero-beta-D-manno-heptose 7-phosphate</text>
        <dbReference type="Rhea" id="RHEA:27489"/>
        <dbReference type="ChEBI" id="CHEBI:57483"/>
        <dbReference type="ChEBI" id="CHEBI:60203"/>
        <dbReference type="ChEBI" id="CHEBI:60204"/>
        <dbReference type="EC" id="5.3.1.28"/>
    </reaction>
</comment>
<comment type="cofactor">
    <cofactor evidence="1">
        <name>Zn(2+)</name>
        <dbReference type="ChEBI" id="CHEBI:29105"/>
    </cofactor>
    <text evidence="1">Binds 1 zinc ion per subunit.</text>
</comment>
<comment type="pathway">
    <text evidence="1">Carbohydrate biosynthesis; D-glycero-D-manno-heptose 7-phosphate biosynthesis; D-glycero-alpha-D-manno-heptose 7-phosphate and D-glycero-beta-D-manno-heptose 7-phosphate from sedoheptulose 7-phosphate: step 1/1.</text>
</comment>
<comment type="subunit">
    <text evidence="1">Homotetramer.</text>
</comment>
<comment type="subcellular location">
    <subcellularLocation>
        <location evidence="1">Cytoplasm</location>
    </subcellularLocation>
</comment>
<comment type="miscellaneous">
    <text evidence="1">The reaction produces a racemic mixture of D-glycero-alpha-D-manno-heptose 7-phosphate and D-glycero-beta-D-manno-heptose 7-phosphate.</text>
</comment>
<comment type="similarity">
    <text evidence="1">Belongs to the SIS family. GmhA subfamily.</text>
</comment>
<gene>
    <name evidence="1" type="primary">gmhA</name>
    <name type="ordered locus">Psyr_4115</name>
</gene>